<organism>
    <name type="scientific">Thermus thermophilus (strain ATCC 27634 / DSM 579 / HB8)</name>
    <dbReference type="NCBI Taxonomy" id="300852"/>
    <lineage>
        <taxon>Bacteria</taxon>
        <taxon>Thermotogati</taxon>
        <taxon>Deinococcota</taxon>
        <taxon>Deinococci</taxon>
        <taxon>Thermales</taxon>
        <taxon>Thermaceae</taxon>
        <taxon>Thermus</taxon>
    </lineage>
</organism>
<protein>
    <recommendedName>
        <fullName evidence="1">Protein translocase subunit SecA</fullName>
        <ecNumber evidence="1">7.4.2.8</ecNumber>
    </recommendedName>
</protein>
<reference key="1">
    <citation type="submission" date="2004-11" db="EMBL/GenBank/DDBJ databases">
        <title>Complete genome sequence of Thermus thermophilus HB8.</title>
        <authorList>
            <person name="Masui R."/>
            <person name="Kurokawa K."/>
            <person name="Nakagawa N."/>
            <person name="Tokunaga F."/>
            <person name="Koyama Y."/>
            <person name="Shibata T."/>
            <person name="Oshima T."/>
            <person name="Yokoyama S."/>
            <person name="Yasunaga T."/>
            <person name="Kuramitsu S."/>
        </authorList>
    </citation>
    <scope>NUCLEOTIDE SEQUENCE [LARGE SCALE GENOMIC DNA]</scope>
    <source>
        <strain>ATCC 27634 / DSM 579 / HB8</strain>
    </source>
</reference>
<reference key="2">
    <citation type="journal article" date="2008" name="Nature">
        <title>Conformational transition of Sec machinery inferred from bacterial SecYE structures.</title>
        <authorList>
            <person name="Tsukazaki T."/>
            <person name="Mori H."/>
            <person name="Fukai S."/>
            <person name="Ishitani R."/>
            <person name="Mori T."/>
            <person name="Dohmae N."/>
            <person name="Perederina A."/>
            <person name="Sugita Y."/>
            <person name="Vassylyev D.G."/>
            <person name="Ito K."/>
            <person name="Nureki O."/>
        </authorList>
    </citation>
    <scope>INTERACTION WITH SECY</scope>
</reference>
<reference key="3">
    <citation type="journal article" date="2006" name="J. Mol. Biol.">
        <title>Crystal structure of the translocation ATPase SecA from Thermus thermophilus reveals a parallel, head-to-head dimer.</title>
        <authorList>
            <person name="Vassylyev D.G."/>
            <person name="Mori H."/>
            <person name="Vassylyeva M.N."/>
            <person name="Tsukazaki T."/>
            <person name="Kimura Y."/>
            <person name="Tahirov T.H."/>
            <person name="Ito K."/>
        </authorList>
    </citation>
    <scope>X-RAY CRYSTALLOGRAPHY (2.8 ANGSTROMS)</scope>
    <scope>SUBUNIT</scope>
</reference>
<gene>
    <name evidence="1" type="primary">secA</name>
    <name type="ordered locus">TTHA1251</name>
</gene>
<dbReference type="EC" id="7.4.2.8" evidence="1"/>
<dbReference type="EMBL" id="AP008226">
    <property type="protein sequence ID" value="BAD71074.1"/>
    <property type="molecule type" value="Genomic_DNA"/>
</dbReference>
<dbReference type="RefSeq" id="WP_011228548.1">
    <property type="nucleotide sequence ID" value="NC_006461.1"/>
</dbReference>
<dbReference type="RefSeq" id="YP_144517.1">
    <property type="nucleotide sequence ID" value="NC_006461.1"/>
</dbReference>
<dbReference type="PDB" id="2IPC">
    <property type="method" value="X-ray"/>
    <property type="resolution" value="2.80 A"/>
    <property type="chains" value="A/B/C/D=1-997"/>
</dbReference>
<dbReference type="PDBsum" id="2IPC"/>
<dbReference type="SMR" id="Q5SIW3"/>
<dbReference type="DIP" id="DIP-59815N"/>
<dbReference type="IntAct" id="Q5SIW3">
    <property type="interactions" value="1"/>
</dbReference>
<dbReference type="EnsemblBacteria" id="BAD71074">
    <property type="protein sequence ID" value="BAD71074"/>
    <property type="gene ID" value="BAD71074"/>
</dbReference>
<dbReference type="GeneID" id="3169354"/>
<dbReference type="KEGG" id="ttj:TTHA1251"/>
<dbReference type="PATRIC" id="fig|300852.9.peg.1230"/>
<dbReference type="eggNOG" id="COG0653">
    <property type="taxonomic scope" value="Bacteria"/>
</dbReference>
<dbReference type="HOGENOM" id="CLU_005314_3_0_0"/>
<dbReference type="PhylomeDB" id="Q5SIW3"/>
<dbReference type="EvolutionaryTrace" id="Q5SIW3"/>
<dbReference type="Proteomes" id="UP000000532">
    <property type="component" value="Chromosome"/>
</dbReference>
<dbReference type="GO" id="GO:0031522">
    <property type="term" value="C:cell envelope Sec protein transport complex"/>
    <property type="evidence" value="ECO:0007669"/>
    <property type="project" value="TreeGrafter"/>
</dbReference>
<dbReference type="GO" id="GO:0005829">
    <property type="term" value="C:cytosol"/>
    <property type="evidence" value="ECO:0007669"/>
    <property type="project" value="TreeGrafter"/>
</dbReference>
<dbReference type="GO" id="GO:0005886">
    <property type="term" value="C:plasma membrane"/>
    <property type="evidence" value="ECO:0007669"/>
    <property type="project" value="UniProtKB-SubCell"/>
</dbReference>
<dbReference type="GO" id="GO:0005524">
    <property type="term" value="F:ATP binding"/>
    <property type="evidence" value="ECO:0007669"/>
    <property type="project" value="UniProtKB-UniRule"/>
</dbReference>
<dbReference type="GO" id="GO:0008564">
    <property type="term" value="F:protein-exporting ATPase activity"/>
    <property type="evidence" value="ECO:0007669"/>
    <property type="project" value="UniProtKB-EC"/>
</dbReference>
<dbReference type="GO" id="GO:0065002">
    <property type="term" value="P:intracellular protein transmembrane transport"/>
    <property type="evidence" value="ECO:0007669"/>
    <property type="project" value="UniProtKB-UniRule"/>
</dbReference>
<dbReference type="GO" id="GO:0017038">
    <property type="term" value="P:protein import"/>
    <property type="evidence" value="ECO:0007669"/>
    <property type="project" value="InterPro"/>
</dbReference>
<dbReference type="GO" id="GO:0006605">
    <property type="term" value="P:protein targeting"/>
    <property type="evidence" value="ECO:0007669"/>
    <property type="project" value="UniProtKB-UniRule"/>
</dbReference>
<dbReference type="GO" id="GO:0043952">
    <property type="term" value="P:protein transport by the Sec complex"/>
    <property type="evidence" value="ECO:0007669"/>
    <property type="project" value="TreeGrafter"/>
</dbReference>
<dbReference type="CDD" id="cd17928">
    <property type="entry name" value="DEXDc_SecA"/>
    <property type="match status" value="1"/>
</dbReference>
<dbReference type="CDD" id="cd18803">
    <property type="entry name" value="SF2_C_secA"/>
    <property type="match status" value="1"/>
</dbReference>
<dbReference type="FunFam" id="1.10.3060.10:FF:000003">
    <property type="entry name" value="Protein translocase subunit SecA"/>
    <property type="match status" value="1"/>
</dbReference>
<dbReference type="FunFam" id="3.40.50.300:FF:000334">
    <property type="entry name" value="Protein translocase subunit SecA"/>
    <property type="match status" value="1"/>
</dbReference>
<dbReference type="FunFam" id="3.90.1440.10:FF:000002">
    <property type="entry name" value="Protein translocase subunit SecA"/>
    <property type="match status" value="1"/>
</dbReference>
<dbReference type="Gene3D" id="1.10.3060.10">
    <property type="entry name" value="Helical scaffold and wing domains of SecA"/>
    <property type="match status" value="1"/>
</dbReference>
<dbReference type="Gene3D" id="3.40.50.300">
    <property type="entry name" value="P-loop containing nucleotide triphosphate hydrolases"/>
    <property type="match status" value="2"/>
</dbReference>
<dbReference type="Gene3D" id="3.90.1440.10">
    <property type="entry name" value="SecA, preprotein cross-linking domain"/>
    <property type="match status" value="1"/>
</dbReference>
<dbReference type="HAMAP" id="MF_01382">
    <property type="entry name" value="SecA"/>
    <property type="match status" value="1"/>
</dbReference>
<dbReference type="InterPro" id="IPR014001">
    <property type="entry name" value="Helicase_ATP-bd"/>
</dbReference>
<dbReference type="InterPro" id="IPR027417">
    <property type="entry name" value="P-loop_NTPase"/>
</dbReference>
<dbReference type="InterPro" id="IPR000185">
    <property type="entry name" value="SecA"/>
</dbReference>
<dbReference type="InterPro" id="IPR020937">
    <property type="entry name" value="SecA_CS"/>
</dbReference>
<dbReference type="InterPro" id="IPR011115">
    <property type="entry name" value="SecA_DEAD"/>
</dbReference>
<dbReference type="InterPro" id="IPR014018">
    <property type="entry name" value="SecA_motor_DEAD"/>
</dbReference>
<dbReference type="InterPro" id="IPR011130">
    <property type="entry name" value="SecA_preprotein_X-link_dom"/>
</dbReference>
<dbReference type="InterPro" id="IPR044722">
    <property type="entry name" value="SecA_SF2_C"/>
</dbReference>
<dbReference type="InterPro" id="IPR011116">
    <property type="entry name" value="SecA_Wing/Scaffold"/>
</dbReference>
<dbReference type="InterPro" id="IPR036266">
    <property type="entry name" value="SecA_Wing/Scaffold_sf"/>
</dbReference>
<dbReference type="InterPro" id="IPR036670">
    <property type="entry name" value="SecA_X-link_sf"/>
</dbReference>
<dbReference type="NCBIfam" id="TIGR00963">
    <property type="entry name" value="secA"/>
    <property type="match status" value="1"/>
</dbReference>
<dbReference type="PANTHER" id="PTHR30612:SF0">
    <property type="entry name" value="CHLOROPLAST PROTEIN-TRANSPORTING ATPASE"/>
    <property type="match status" value="1"/>
</dbReference>
<dbReference type="PANTHER" id="PTHR30612">
    <property type="entry name" value="SECA INNER MEMBRANE COMPONENT OF SEC PROTEIN SECRETION SYSTEM"/>
    <property type="match status" value="1"/>
</dbReference>
<dbReference type="Pfam" id="PF21090">
    <property type="entry name" value="P-loop_SecA"/>
    <property type="match status" value="1"/>
</dbReference>
<dbReference type="Pfam" id="PF07517">
    <property type="entry name" value="SecA_DEAD"/>
    <property type="match status" value="1"/>
</dbReference>
<dbReference type="Pfam" id="PF01043">
    <property type="entry name" value="SecA_PP_bind"/>
    <property type="match status" value="1"/>
</dbReference>
<dbReference type="Pfam" id="PF07516">
    <property type="entry name" value="SecA_SW"/>
    <property type="match status" value="1"/>
</dbReference>
<dbReference type="PRINTS" id="PR00906">
    <property type="entry name" value="SECA"/>
</dbReference>
<dbReference type="SMART" id="SM00957">
    <property type="entry name" value="SecA_DEAD"/>
    <property type="match status" value="1"/>
</dbReference>
<dbReference type="SMART" id="SM00958">
    <property type="entry name" value="SecA_PP_bind"/>
    <property type="match status" value="1"/>
</dbReference>
<dbReference type="SUPFAM" id="SSF81886">
    <property type="entry name" value="Helical scaffold and wing domains of SecA"/>
    <property type="match status" value="1"/>
</dbReference>
<dbReference type="SUPFAM" id="SSF52540">
    <property type="entry name" value="P-loop containing nucleoside triphosphate hydrolases"/>
    <property type="match status" value="2"/>
</dbReference>
<dbReference type="SUPFAM" id="SSF81767">
    <property type="entry name" value="Pre-protein crosslinking domain of SecA"/>
    <property type="match status" value="1"/>
</dbReference>
<dbReference type="PROSITE" id="PS01312">
    <property type="entry name" value="SECA"/>
    <property type="match status" value="1"/>
</dbReference>
<dbReference type="PROSITE" id="PS51196">
    <property type="entry name" value="SECA_MOTOR_DEAD"/>
    <property type="match status" value="1"/>
</dbReference>
<evidence type="ECO:0000255" key="1">
    <source>
        <dbReference type="HAMAP-Rule" id="MF_01382"/>
    </source>
</evidence>
<evidence type="ECO:0000256" key="2">
    <source>
        <dbReference type="SAM" id="MobiDB-lite"/>
    </source>
</evidence>
<evidence type="ECO:0000269" key="3">
    <source>
    </source>
</evidence>
<evidence type="ECO:0007829" key="4">
    <source>
        <dbReference type="PDB" id="2IPC"/>
    </source>
</evidence>
<feature type="chain" id="PRO_0000321026" description="Protein translocase subunit SecA">
    <location>
        <begin position="1"/>
        <end position="997"/>
    </location>
</feature>
<feature type="region of interest" description="Disordered" evidence="2">
    <location>
        <begin position="950"/>
        <end position="997"/>
    </location>
</feature>
<feature type="compositionally biased region" description="Basic and acidic residues" evidence="2">
    <location>
        <begin position="957"/>
        <end position="971"/>
    </location>
</feature>
<feature type="compositionally biased region" description="Basic residues" evidence="2">
    <location>
        <begin position="984"/>
        <end position="997"/>
    </location>
</feature>
<feature type="binding site" evidence="1">
    <location>
        <position position="84"/>
    </location>
    <ligand>
        <name>ATP</name>
        <dbReference type="ChEBI" id="CHEBI:30616"/>
    </ligand>
</feature>
<feature type="binding site" evidence="1">
    <location>
        <begin position="102"/>
        <end position="106"/>
    </location>
    <ligand>
        <name>ATP</name>
        <dbReference type="ChEBI" id="CHEBI:30616"/>
    </ligand>
</feature>
<feature type="binding site" evidence="1">
    <location>
        <position position="582"/>
    </location>
    <ligand>
        <name>ATP</name>
        <dbReference type="ChEBI" id="CHEBI:30616"/>
    </ligand>
</feature>
<feature type="helix" evidence="4">
    <location>
        <begin position="4"/>
        <end position="9"/>
    </location>
</feature>
<feature type="helix" evidence="4">
    <location>
        <begin position="11"/>
        <end position="22"/>
    </location>
</feature>
<feature type="helix" evidence="4">
    <location>
        <begin position="24"/>
        <end position="29"/>
    </location>
</feature>
<feature type="helix" evidence="4">
    <location>
        <begin position="31"/>
        <end position="35"/>
    </location>
</feature>
<feature type="helix" evidence="4">
    <location>
        <begin position="40"/>
        <end position="52"/>
    </location>
</feature>
<feature type="helix" evidence="4">
    <location>
        <begin position="57"/>
        <end position="75"/>
    </location>
</feature>
<feature type="helix" evidence="4">
    <location>
        <begin position="82"/>
        <end position="92"/>
    </location>
</feature>
<feature type="strand" evidence="4">
    <location>
        <begin position="95"/>
        <end position="98"/>
    </location>
</feature>
<feature type="helix" evidence="4">
    <location>
        <begin position="103"/>
        <end position="117"/>
    </location>
</feature>
<feature type="strand" evidence="4">
    <location>
        <begin position="124"/>
        <end position="129"/>
    </location>
</feature>
<feature type="helix" evidence="4">
    <location>
        <begin position="130"/>
        <end position="145"/>
    </location>
</feature>
<feature type="turn" evidence="4">
    <location>
        <begin position="146"/>
        <end position="148"/>
    </location>
</feature>
<feature type="strand" evidence="4">
    <location>
        <begin position="151"/>
        <end position="153"/>
    </location>
</feature>
<feature type="helix" evidence="4">
    <location>
        <begin position="160"/>
        <end position="167"/>
    </location>
</feature>
<feature type="strand" evidence="4">
    <location>
        <begin position="169"/>
        <end position="175"/>
    </location>
</feature>
<feature type="helix" evidence="4">
    <location>
        <begin position="176"/>
        <end position="186"/>
    </location>
</feature>
<feature type="turn" evidence="4">
    <location>
        <begin position="192"/>
        <end position="194"/>
    </location>
</feature>
<feature type="strand" evidence="4">
    <location>
        <begin position="199"/>
        <end position="203"/>
    </location>
</feature>
<feature type="strand" evidence="4">
    <location>
        <begin position="205"/>
        <end position="208"/>
    </location>
</feature>
<feature type="helix" evidence="4">
    <location>
        <begin position="211"/>
        <end position="214"/>
    </location>
</feature>
<feature type="strand" evidence="4">
    <location>
        <begin position="223"/>
        <end position="228"/>
    </location>
</feature>
<feature type="helix" evidence="4">
    <location>
        <begin position="233"/>
        <end position="245"/>
    </location>
</feature>
<feature type="strand" evidence="4">
    <location>
        <begin position="254"/>
        <end position="256"/>
    </location>
</feature>
<feature type="helix" evidence="4">
    <location>
        <begin position="277"/>
        <end position="287"/>
    </location>
</feature>
<feature type="helix" evidence="4">
    <location>
        <begin position="290"/>
        <end position="293"/>
    </location>
</feature>
<feature type="turn" evidence="4">
    <location>
        <begin position="294"/>
        <end position="296"/>
    </location>
</feature>
<feature type="helix" evidence="4">
    <location>
        <begin position="298"/>
        <end position="312"/>
    </location>
</feature>
<feature type="helix" evidence="4">
    <location>
        <begin position="316"/>
        <end position="319"/>
    </location>
</feature>
<feature type="strand" evidence="4">
    <location>
        <begin position="320"/>
        <end position="322"/>
    </location>
</feature>
<feature type="strand" evidence="4">
    <location>
        <begin position="327"/>
        <end position="331"/>
    </location>
</feature>
<feature type="turn" evidence="4">
    <location>
        <begin position="332"/>
        <end position="335"/>
    </location>
</feature>
<feature type="helix" evidence="4">
    <location>
        <begin position="344"/>
        <end position="346"/>
    </location>
</feature>
<feature type="helix" evidence="4">
    <location>
        <begin position="347"/>
        <end position="354"/>
    </location>
</feature>
<feature type="strand" evidence="4">
    <location>
        <begin position="364"/>
        <end position="369"/>
    </location>
</feature>
<feature type="helix" evidence="4">
    <location>
        <begin position="371"/>
        <end position="375"/>
    </location>
</feature>
<feature type="strand" evidence="4">
    <location>
        <begin position="378"/>
        <end position="387"/>
    </location>
</feature>
<feature type="helix" evidence="4">
    <location>
        <begin position="389"/>
        <end position="391"/>
    </location>
</feature>
<feature type="helix" evidence="4">
    <location>
        <begin position="392"/>
        <end position="399"/>
    </location>
</feature>
<feature type="strand" evidence="4">
    <location>
        <begin position="403"/>
        <end position="405"/>
    </location>
</feature>
<feature type="strand" evidence="4">
    <location>
        <begin position="415"/>
        <end position="424"/>
    </location>
</feature>
<feature type="helix" evidence="4">
    <location>
        <begin position="425"/>
        <end position="442"/>
    </location>
</feature>
<feature type="strand" evidence="4">
    <location>
        <begin position="446"/>
        <end position="449"/>
    </location>
</feature>
<feature type="helix" evidence="4">
    <location>
        <begin position="453"/>
        <end position="464"/>
    </location>
</feature>
<feature type="helix" evidence="4">
    <location>
        <begin position="466"/>
        <end position="469"/>
    </location>
</feature>
<feature type="helix" evidence="4">
    <location>
        <begin position="470"/>
        <end position="484"/>
    </location>
</feature>
<feature type="helix" evidence="4">
    <location>
        <begin position="490"/>
        <end position="498"/>
    </location>
</feature>
<feature type="strand" evidence="4">
    <location>
        <begin position="500"/>
        <end position="502"/>
    </location>
</feature>
<feature type="helix" evidence="4">
    <location>
        <begin position="507"/>
        <end position="510"/>
    </location>
</feature>
<feature type="helix" evidence="4">
    <location>
        <begin position="512"/>
        <end position="516"/>
    </location>
</feature>
<feature type="helix" evidence="4">
    <location>
        <begin position="521"/>
        <end position="542"/>
    </location>
</feature>
<feature type="strand" evidence="4">
    <location>
        <begin position="551"/>
        <end position="553"/>
    </location>
</feature>
<feature type="helix" evidence="4">
    <location>
        <begin position="554"/>
        <end position="562"/>
    </location>
</feature>
<feature type="turn" evidence="4">
    <location>
        <begin position="563"/>
        <end position="565"/>
    </location>
</feature>
<feature type="strand" evidence="4">
    <location>
        <begin position="570"/>
        <end position="573"/>
    </location>
</feature>
<feature type="turn" evidence="4">
    <location>
        <begin position="577"/>
        <end position="580"/>
    </location>
</feature>
<feature type="helix" evidence="4">
    <location>
        <begin position="589"/>
        <end position="595"/>
    </location>
</feature>
<feature type="strand" evidence="4">
    <location>
        <begin position="598"/>
        <end position="600"/>
    </location>
</feature>
<feature type="helix" evidence="4">
    <location>
        <begin position="606"/>
        <end position="618"/>
    </location>
</feature>
<feature type="helix" evidence="4">
    <location>
        <begin position="621"/>
        <end position="630"/>
    </location>
</feature>
<feature type="helix" evidence="4">
    <location>
        <begin position="635"/>
        <end position="655"/>
    </location>
</feature>
<feature type="turn" evidence="4">
    <location>
        <begin position="656"/>
        <end position="658"/>
    </location>
</feature>
<feature type="strand" evidence="4">
    <location>
        <begin position="663"/>
        <end position="667"/>
    </location>
</feature>
<feature type="helix" evidence="4">
    <location>
        <begin position="672"/>
        <end position="680"/>
    </location>
</feature>
<feature type="strand" evidence="4">
    <location>
        <begin position="690"/>
        <end position="699"/>
    </location>
</feature>
<feature type="helix" evidence="4">
    <location>
        <begin position="700"/>
        <end position="704"/>
    </location>
</feature>
<feature type="helix" evidence="4">
    <location>
        <begin position="710"/>
        <end position="716"/>
    </location>
</feature>
<feature type="strand" evidence="4">
    <location>
        <begin position="721"/>
        <end position="723"/>
    </location>
</feature>
<feature type="helix" evidence="4">
    <location>
        <begin position="728"/>
        <end position="774"/>
    </location>
</feature>
<feature type="helix" evidence="4">
    <location>
        <begin position="778"/>
        <end position="801"/>
    </location>
</feature>
<feature type="strand" evidence="4">
    <location>
        <begin position="807"/>
        <end position="809"/>
    </location>
</feature>
<feature type="helix" evidence="4">
    <location>
        <begin position="812"/>
        <end position="821"/>
    </location>
</feature>
<feature type="helix" evidence="4">
    <location>
        <begin position="830"/>
        <end position="836"/>
    </location>
</feature>
<feature type="helix" evidence="4">
    <location>
        <begin position="840"/>
        <end position="860"/>
    </location>
</feature>
<feature type="helix" evidence="4">
    <location>
        <begin position="863"/>
        <end position="896"/>
    </location>
</feature>
<feature type="strand" evidence="4">
    <location>
        <begin position="901"/>
        <end position="904"/>
    </location>
</feature>
<feature type="helix" evidence="4">
    <location>
        <begin position="906"/>
        <end position="934"/>
    </location>
</feature>
<name>SECA_THET8</name>
<proteinExistence type="evidence at protein level"/>
<accession>Q5SIW3</accession>
<comment type="function">
    <text evidence="1">Part of the Sec protein translocase complex. Interacts with the SecYEG preprotein conducting channel. Has a central role in coupling the hydrolysis of ATP to the transfer of proteins into and across the cell membrane, serving as an ATP-driven molecular motor driving the stepwise translocation of polypeptide chains across the membrane.</text>
</comment>
<comment type="catalytic activity">
    <reaction evidence="1">
        <text>ATP + H2O + cellular proteinSide 1 = ADP + phosphate + cellular proteinSide 2.</text>
        <dbReference type="EC" id="7.4.2.8"/>
    </reaction>
</comment>
<comment type="subunit">
    <text evidence="3">Part of the essential Sec protein translocation apparatus which comprises SecA, SecYEG and auxiliary proteins SecDF. Other proteins may also be involved. Monomer and homodimer.</text>
</comment>
<comment type="subcellular location">
    <subcellularLocation>
        <location evidence="1">Cell inner membrane</location>
        <topology evidence="1">Peripheral membrane protein</topology>
        <orientation evidence="1">Cytoplasmic side</orientation>
    </subcellularLocation>
    <subcellularLocation>
        <location evidence="1">Cytoplasm</location>
    </subcellularLocation>
    <text evidence="1">Distribution is 50-50.</text>
</comment>
<comment type="similarity">
    <text evidence="1">Belongs to the SecA family.</text>
</comment>
<keyword id="KW-0002">3D-structure</keyword>
<keyword id="KW-0067">ATP-binding</keyword>
<keyword id="KW-0997">Cell inner membrane</keyword>
<keyword id="KW-1003">Cell membrane</keyword>
<keyword id="KW-0963">Cytoplasm</keyword>
<keyword id="KW-0472">Membrane</keyword>
<keyword id="KW-0547">Nucleotide-binding</keyword>
<keyword id="KW-0653">Protein transport</keyword>
<keyword id="KW-1185">Reference proteome</keyword>
<keyword id="KW-1278">Translocase</keyword>
<keyword id="KW-0811">Translocation</keyword>
<keyword id="KW-0813">Transport</keyword>
<sequence length="997" mass="113953">MLGLLRRLFDNNEREIARYYKQVVEPVNRLEAEVEKLPDLAAAYRELKEKHEKGASLDELLPMAFALTRESAKRYLGMRHFDVQLIGGAVLHEGKIAEMKTGEGKTLVATLAVALNALTGKGVHVVTVNDYLARRDAEWMGPVYRGLGLSVGVIQHASTPAERRKAYLADVTYVTNSELGFDYLRDNMAISPDQLVLRHDHPLHYAIIDEVDSILIDEARTPLIISGPAEKATDLYYKMAEIAKKLERGLPAEPGVRKEPTGDYTVEEKNRSVHLTLQGIAKAEKLLGIEGLFSPENMELAHMLIQAIRAKELYHRDRDYIVQDGQVIIVDEFTGRLMPGRRYGEGLHQAIEAKEGVRIERENQTLATITYQNFFRLYEKRAGMTGTAKTEEKEFQEIYGMDVVVVPTNRPVIRKDFPDVVYRTEKGKFYAVVEEIAEKYERGQPVLVGTISIEKSERLSQMLKEPRLYLPRLEMRLELFKKASQKQQGPEWERLRKLLERPAQLKDEDLAPFEGLIPPKGNLRTAWEGLKRAVHTLAVLRQGIPHQVLNAKHHAREAEIVAQAGRSKTVTIATNMAGRGTDIKLGGNPEYLAAALLEKEGFDRYEWKVELFIKKMVAGKEEEARALAQELGIREELLERIREIREECKQDEERVRALGGLFIIGTERHESRRIDNQLRGRAGRQGDPGGSRFYVSFDDDLMRLFASDRVIAMLDRMGFDDSEPIEHPMVTRSIERAQKRVEDRNFAIRKQLLQFDDVLSRQREVIYAQRRLILLGKDEEVKEAAIGMVEETVASLAENFLNPEVHPEDWDLEGLKATLLDTAPQLQDFPFAELRALKAEEAVERLVEAALKAYEAREAELSPPLMRAVERFVILNVVDNAWKEHLHNLDVLRQGIFLRGYGQKDPFQEYKIEATRLFNEMVAFIKSEVAKFLFRLKVEAEPVRPVREAPYVPVPEAKPEPSEVFGVERKRATPPPQPGLSRAERRRLMRQEKKRKK</sequence>